<proteinExistence type="uncertain"/>
<keyword id="KW-1185">Reference proteome</keyword>
<evidence type="ECO:0000256" key="1">
    <source>
        <dbReference type="SAM" id="MobiDB-lite"/>
    </source>
</evidence>
<evidence type="ECO:0000305" key="2"/>
<evidence type="ECO:0000312" key="3">
    <source>
        <dbReference type="HGNC" id="HGNC:45036"/>
    </source>
</evidence>
<sequence>MRAHVAQHVSGELGAVGLQVEADQLVGEVQGVHGQQRAPRDAPVALAQRHRQQLQLELLELLGGQVLQRIQDGVARAPHGSRIPGRCRRSPRCSRRPGGSRLRGGTWTPRLPPTLVSRLPAPVRCPPAKGASLLHPWSPPTQASGLGPQAVGGRQDRALQLACEVGPGRGPQRGSWVAPACLWACTSGYRPETWAGSHWVYWST</sequence>
<name>PYAS1_HUMAN</name>
<gene>
    <name evidence="3" type="primary">PYCARD-AS1</name>
    <name evidence="3" type="synonym">C16orf98</name>
    <name evidence="3" type="synonym">PYCARDOS</name>
</gene>
<organism>
    <name type="scientific">Homo sapiens</name>
    <name type="common">Human</name>
    <dbReference type="NCBI Taxonomy" id="9606"/>
    <lineage>
        <taxon>Eukaryota</taxon>
        <taxon>Metazoa</taxon>
        <taxon>Chordata</taxon>
        <taxon>Craniata</taxon>
        <taxon>Vertebrata</taxon>
        <taxon>Euteleostomi</taxon>
        <taxon>Mammalia</taxon>
        <taxon>Eutheria</taxon>
        <taxon>Euarchontoglires</taxon>
        <taxon>Primates</taxon>
        <taxon>Haplorrhini</taxon>
        <taxon>Catarrhini</taxon>
        <taxon>Hominidae</taxon>
        <taxon>Homo</taxon>
    </lineage>
</organism>
<protein>
    <recommendedName>
        <fullName evidence="3">Putative uncharacterized protein PYCARD-AS1</fullName>
    </recommendedName>
    <alternativeName>
        <fullName evidence="3">PYCARD antisense RNA 1</fullName>
    </alternativeName>
    <alternativeName>
        <fullName evidence="2">PYCARD antisense gene protein 1</fullName>
    </alternativeName>
    <alternativeName>
        <fullName evidence="3">PYCARD opposite strand protein</fullName>
    </alternativeName>
</protein>
<comment type="caution">
    <text evidence="2">Product of a dubious gene prediction. Overlaps in opposite strand with PYCARD.</text>
</comment>
<comment type="sequence caution" evidence="2">
    <conflict type="frameshift">
        <sequence resource="EMBL" id="BX464768"/>
    </conflict>
</comment>
<dbReference type="EMBL" id="BX464768">
    <property type="status" value="NOT_ANNOTATED_CDS"/>
    <property type="molecule type" value="mRNA"/>
</dbReference>
<dbReference type="EMBL" id="AC009088">
    <property type="status" value="NOT_ANNOTATED_CDS"/>
    <property type="molecule type" value="Genomic_DNA"/>
</dbReference>
<dbReference type="iPTMnet" id="I3L0S3"/>
<dbReference type="PhosphoSitePlus" id="I3L0S3"/>
<dbReference type="BioMuta" id="HGNC:45036"/>
<dbReference type="MassIVE" id="I3L0S3"/>
<dbReference type="AGR" id="HGNC:45036"/>
<dbReference type="GeneCards" id="PYCARD-AS1"/>
<dbReference type="HGNC" id="HGNC:45036">
    <property type="gene designation" value="PYCARD-AS1"/>
</dbReference>
<dbReference type="neXtProt" id="NX_I3L0S3"/>
<dbReference type="InParanoid" id="I3L0S3"/>
<dbReference type="PAN-GO" id="I3L0S3">
    <property type="GO annotations" value="0 GO annotations based on evolutionary models"/>
</dbReference>
<dbReference type="ChiTaRS" id="PYCARD-AS1">
    <property type="organism name" value="human"/>
</dbReference>
<dbReference type="Pharos" id="I3L0S3">
    <property type="development level" value="Tdark"/>
</dbReference>
<dbReference type="Proteomes" id="UP000005640">
    <property type="component" value="Unplaced"/>
</dbReference>
<dbReference type="RNAct" id="I3L0S3">
    <property type="molecule type" value="protein"/>
</dbReference>
<accession>I3L0S3</accession>
<feature type="chain" id="PRO_0000422171" description="Putative uncharacterized protein PYCARD-AS1">
    <location>
        <begin position="1"/>
        <end position="204"/>
    </location>
</feature>
<feature type="region of interest" description="Disordered" evidence="1">
    <location>
        <begin position="77"/>
        <end position="111"/>
    </location>
</feature>
<feature type="compositionally biased region" description="Basic residues" evidence="1">
    <location>
        <begin position="85"/>
        <end position="95"/>
    </location>
</feature>
<feature type="compositionally biased region" description="Low complexity" evidence="1">
    <location>
        <begin position="96"/>
        <end position="105"/>
    </location>
</feature>
<feature type="sequence conflict" description="In Ref. 1; BX464768." evidence="2" ref="1">
    <original>A</original>
    <variation>S</variation>
    <location>
        <position position="77"/>
    </location>
</feature>
<feature type="sequence conflict" description="In Ref. 1; BX464768." evidence="2" ref="1">
    <original>A</original>
    <variation>S</variation>
    <location>
        <position position="128"/>
    </location>
</feature>
<feature type="sequence conflict" description="In Ref. 1; BX464768." evidence="2" ref="1">
    <original>W</original>
    <variation>L</variation>
    <location>
        <position position="194"/>
    </location>
</feature>
<reference key="1">
    <citation type="submission" date="2004-03" db="EMBL/GenBank/DDBJ databases">
        <authorList>
            <person name="Li W.B."/>
            <person name="Gruber C."/>
            <person name="Jessee J."/>
            <person name="Polayes D."/>
        </authorList>
    </citation>
    <scope>NUCLEOTIDE SEQUENCE [LARGE SCALE MRNA]</scope>
    <source>
        <tissue>Thymus</tissue>
    </source>
</reference>
<reference key="2">
    <citation type="journal article" date="2004" name="Nature">
        <title>The sequence and analysis of duplication-rich human chromosome 16.</title>
        <authorList>
            <person name="Martin J."/>
            <person name="Han C."/>
            <person name="Gordon L.A."/>
            <person name="Terry A."/>
            <person name="Prabhakar S."/>
            <person name="She X."/>
            <person name="Xie G."/>
            <person name="Hellsten U."/>
            <person name="Chan Y.M."/>
            <person name="Altherr M."/>
            <person name="Couronne O."/>
            <person name="Aerts A."/>
            <person name="Bajorek E."/>
            <person name="Black S."/>
            <person name="Blumer H."/>
            <person name="Branscomb E."/>
            <person name="Brown N.C."/>
            <person name="Bruno W.J."/>
            <person name="Buckingham J.M."/>
            <person name="Callen D.F."/>
            <person name="Campbell C.S."/>
            <person name="Campbell M.L."/>
            <person name="Campbell E.W."/>
            <person name="Caoile C."/>
            <person name="Challacombe J.F."/>
            <person name="Chasteen L.A."/>
            <person name="Chertkov O."/>
            <person name="Chi H.C."/>
            <person name="Christensen M."/>
            <person name="Clark L.M."/>
            <person name="Cohn J.D."/>
            <person name="Denys M."/>
            <person name="Detter J.C."/>
            <person name="Dickson M."/>
            <person name="Dimitrijevic-Bussod M."/>
            <person name="Escobar J."/>
            <person name="Fawcett J.J."/>
            <person name="Flowers D."/>
            <person name="Fotopulos D."/>
            <person name="Glavina T."/>
            <person name="Gomez M."/>
            <person name="Gonzales E."/>
            <person name="Goodstein D."/>
            <person name="Goodwin L.A."/>
            <person name="Grady D.L."/>
            <person name="Grigoriev I."/>
            <person name="Groza M."/>
            <person name="Hammon N."/>
            <person name="Hawkins T."/>
            <person name="Haydu L."/>
            <person name="Hildebrand C.E."/>
            <person name="Huang W."/>
            <person name="Israni S."/>
            <person name="Jett J."/>
            <person name="Jewett P.B."/>
            <person name="Kadner K."/>
            <person name="Kimball H."/>
            <person name="Kobayashi A."/>
            <person name="Krawczyk M.-C."/>
            <person name="Leyba T."/>
            <person name="Longmire J.L."/>
            <person name="Lopez F."/>
            <person name="Lou Y."/>
            <person name="Lowry S."/>
            <person name="Ludeman T."/>
            <person name="Manohar C.F."/>
            <person name="Mark G.A."/>
            <person name="McMurray K.L."/>
            <person name="Meincke L.J."/>
            <person name="Morgan J."/>
            <person name="Moyzis R.K."/>
            <person name="Mundt M.O."/>
            <person name="Munk A.C."/>
            <person name="Nandkeshwar R.D."/>
            <person name="Pitluck S."/>
            <person name="Pollard M."/>
            <person name="Predki P."/>
            <person name="Parson-Quintana B."/>
            <person name="Ramirez L."/>
            <person name="Rash S."/>
            <person name="Retterer J."/>
            <person name="Ricke D.O."/>
            <person name="Robinson D.L."/>
            <person name="Rodriguez A."/>
            <person name="Salamov A."/>
            <person name="Saunders E.H."/>
            <person name="Scott D."/>
            <person name="Shough T."/>
            <person name="Stallings R.L."/>
            <person name="Stalvey M."/>
            <person name="Sutherland R.D."/>
            <person name="Tapia R."/>
            <person name="Tesmer J.G."/>
            <person name="Thayer N."/>
            <person name="Thompson L.S."/>
            <person name="Tice H."/>
            <person name="Torney D.C."/>
            <person name="Tran-Gyamfi M."/>
            <person name="Tsai M."/>
            <person name="Ulanovsky L.E."/>
            <person name="Ustaszewska A."/>
            <person name="Vo N."/>
            <person name="White P.S."/>
            <person name="Williams A.L."/>
            <person name="Wills P.L."/>
            <person name="Wu J.-R."/>
            <person name="Wu K."/>
            <person name="Yang J."/>
            <person name="DeJong P."/>
            <person name="Bruce D."/>
            <person name="Doggett N.A."/>
            <person name="Deaven L."/>
            <person name="Schmutz J."/>
            <person name="Grimwood J."/>
            <person name="Richardson P."/>
            <person name="Rokhsar D.S."/>
            <person name="Eichler E.E."/>
            <person name="Gilna P."/>
            <person name="Lucas S.M."/>
            <person name="Myers R.M."/>
            <person name="Rubin E.M."/>
            <person name="Pennacchio L.A."/>
        </authorList>
    </citation>
    <scope>NUCLEOTIDE SEQUENCE [LARGE SCALE GENOMIC DNA]</scope>
</reference>